<organism>
    <name type="scientific">Canis lupus familiaris</name>
    <name type="common">Dog</name>
    <name type="synonym">Canis familiaris</name>
    <dbReference type="NCBI Taxonomy" id="9615"/>
    <lineage>
        <taxon>Eukaryota</taxon>
        <taxon>Metazoa</taxon>
        <taxon>Chordata</taxon>
        <taxon>Craniata</taxon>
        <taxon>Vertebrata</taxon>
        <taxon>Euteleostomi</taxon>
        <taxon>Mammalia</taxon>
        <taxon>Eutheria</taxon>
        <taxon>Laurasiatheria</taxon>
        <taxon>Carnivora</taxon>
        <taxon>Caniformia</taxon>
        <taxon>Canidae</taxon>
        <taxon>Canis</taxon>
    </lineage>
</organism>
<protein>
    <recommendedName>
        <fullName>Decorin</fullName>
    </recommendedName>
    <alternativeName>
        <fullName>Bone proteoglycan II</fullName>
    </alternativeName>
    <alternativeName>
        <fullName>PG-S2</fullName>
    </alternativeName>
</protein>
<accession>Q29393</accession>
<keyword id="KW-1015">Disulfide bond</keyword>
<keyword id="KW-0272">Extracellular matrix</keyword>
<keyword id="KW-0325">Glycoprotein</keyword>
<keyword id="KW-0433">Leucine-rich repeat</keyword>
<keyword id="KW-0654">Proteoglycan</keyword>
<keyword id="KW-1185">Reference proteome</keyword>
<keyword id="KW-0677">Repeat</keyword>
<keyword id="KW-0964">Secreted</keyword>
<keyword id="KW-0732">Signal</keyword>
<comment type="function">
    <text evidence="1">May affect the rate of fibrils formation.</text>
</comment>
<comment type="subunit">
    <text evidence="1">Binds to type I and type II collagen, fibronectin and TGF-beta. Forms a ternary complex with MFAP2 and ELN. Interacts with DPT (By similarity).</text>
</comment>
<comment type="subcellular location">
    <subcellularLocation>
        <location evidence="1">Secreted</location>
        <location evidence="1">Extracellular space</location>
        <location evidence="1">Extracellular matrix</location>
    </subcellularLocation>
    <subcellularLocation>
        <location evidence="2">Secreted</location>
    </subcellularLocation>
</comment>
<comment type="PTM">
    <text evidence="1">The attached glycosaminoglycan chain can be either chondroitin sulfate or dermatan sulfate depending upon the tissue of origin.</text>
</comment>
<comment type="similarity">
    <text evidence="5">Belongs to the small leucine-rich proteoglycan (SLRP) family. SLRP class I subfamily.</text>
</comment>
<dbReference type="EMBL" id="U83141">
    <property type="protein sequence ID" value="AAB51245.1"/>
    <property type="molecule type" value="mRNA"/>
</dbReference>
<dbReference type="EMBL" id="L77684">
    <property type="protein sequence ID" value="AAA98062.1"/>
    <property type="molecule type" value="Genomic_DNA"/>
</dbReference>
<dbReference type="RefSeq" id="NP_001003228.1">
    <property type="nucleotide sequence ID" value="NM_001003228.1"/>
</dbReference>
<dbReference type="RefSeq" id="XP_005628882.1">
    <property type="nucleotide sequence ID" value="XM_005628825.2"/>
</dbReference>
<dbReference type="RefSeq" id="XP_005628883.1">
    <property type="nucleotide sequence ID" value="XM_005628826.2"/>
</dbReference>
<dbReference type="RefSeq" id="XP_005628885.1">
    <property type="nucleotide sequence ID" value="XM_005628828.1"/>
</dbReference>
<dbReference type="RefSeq" id="XP_038543096.1">
    <property type="nucleotide sequence ID" value="XM_038687168.1"/>
</dbReference>
<dbReference type="RefSeq" id="XP_038543097.1">
    <property type="nucleotide sequence ID" value="XM_038687169.1"/>
</dbReference>
<dbReference type="RefSeq" id="XP_038543098.1">
    <property type="nucleotide sequence ID" value="XM_038687170.1"/>
</dbReference>
<dbReference type="RefSeq" id="XP_038543099.1">
    <property type="nucleotide sequence ID" value="XM_038687171.1"/>
</dbReference>
<dbReference type="SMR" id="Q29393"/>
<dbReference type="FunCoup" id="Q29393">
    <property type="interactions" value="91"/>
</dbReference>
<dbReference type="STRING" id="9615.ENSCAFP00000009230"/>
<dbReference type="GlyCosmos" id="Q29393">
    <property type="glycosylation" value="4 sites, No reported glycans"/>
</dbReference>
<dbReference type="SwissPalm" id="Q29393"/>
<dbReference type="PaxDb" id="9612-ENSCAFP00000009230"/>
<dbReference type="Ensembl" id="ENSCAFT00000009945.4">
    <property type="protein sequence ID" value="ENSCAFP00000009230.3"/>
    <property type="gene ID" value="ENSCAFG00000006142.5"/>
</dbReference>
<dbReference type="Ensembl" id="ENSCAFT00030029909.1">
    <property type="protein sequence ID" value="ENSCAFP00030026069.1"/>
    <property type="gene ID" value="ENSCAFG00030016164.1"/>
</dbReference>
<dbReference type="Ensembl" id="ENSCAFT00845035000.1">
    <property type="protein sequence ID" value="ENSCAFP00845027407.1"/>
    <property type="gene ID" value="ENSCAFG00845019761.1"/>
</dbReference>
<dbReference type="GeneID" id="403904"/>
<dbReference type="KEGG" id="cfa:403904"/>
<dbReference type="CTD" id="1634"/>
<dbReference type="VEuPathDB" id="HostDB:ENSCAFG00845019761"/>
<dbReference type="VGNC" id="VGNC:54200">
    <property type="gene designation" value="DCN"/>
</dbReference>
<dbReference type="eggNOG" id="KOG0619">
    <property type="taxonomic scope" value="Eukaryota"/>
</dbReference>
<dbReference type="GeneTree" id="ENSGT00940000158382"/>
<dbReference type="HOGENOM" id="CLU_000288_186_0_1"/>
<dbReference type="InParanoid" id="Q29393"/>
<dbReference type="OMA" id="FRCIYER"/>
<dbReference type="OrthoDB" id="1111193at2759"/>
<dbReference type="TreeFam" id="TF334562"/>
<dbReference type="Reactome" id="R-CFA-1474228">
    <property type="pathway name" value="Degradation of the extracellular matrix"/>
</dbReference>
<dbReference type="Reactome" id="R-CFA-1971475">
    <property type="pathway name" value="A tetrasaccharide linker sequence is required for GAG synthesis"/>
</dbReference>
<dbReference type="Reactome" id="R-CFA-2022870">
    <property type="pathway name" value="Chondroitin sulfate biosynthesis"/>
</dbReference>
<dbReference type="Reactome" id="R-CFA-2022923">
    <property type="pathway name" value="Dermatan sulfate biosynthesis"/>
</dbReference>
<dbReference type="Reactome" id="R-CFA-2024101">
    <property type="pathway name" value="CS/DS degradation"/>
</dbReference>
<dbReference type="Reactome" id="R-CFA-3000178">
    <property type="pathway name" value="ECM proteoglycans"/>
</dbReference>
<dbReference type="Proteomes" id="UP000002254">
    <property type="component" value="Chromosome 15"/>
</dbReference>
<dbReference type="Proteomes" id="UP000694429">
    <property type="component" value="Chromosome 15"/>
</dbReference>
<dbReference type="Proteomes" id="UP000694542">
    <property type="component" value="Unplaced"/>
</dbReference>
<dbReference type="Proteomes" id="UP000805418">
    <property type="component" value="Chromosome 15"/>
</dbReference>
<dbReference type="Bgee" id="ENSCAFG00000006142">
    <property type="expression patterns" value="Expressed in cartilage tissue and 47 other cell types or tissues"/>
</dbReference>
<dbReference type="GO" id="GO:0005615">
    <property type="term" value="C:extracellular space"/>
    <property type="evidence" value="ECO:0000318"/>
    <property type="project" value="GO_Central"/>
</dbReference>
<dbReference type="GO" id="GO:0050840">
    <property type="term" value="F:extracellular matrix binding"/>
    <property type="evidence" value="ECO:0007669"/>
    <property type="project" value="Ensembl"/>
</dbReference>
<dbReference type="GO" id="GO:0005539">
    <property type="term" value="F:glycosaminoglycan binding"/>
    <property type="evidence" value="ECO:0007669"/>
    <property type="project" value="Ensembl"/>
</dbReference>
<dbReference type="GO" id="GO:0016525">
    <property type="term" value="P:negative regulation of angiogenesis"/>
    <property type="evidence" value="ECO:0007669"/>
    <property type="project" value="Ensembl"/>
</dbReference>
<dbReference type="GO" id="GO:0010596">
    <property type="term" value="P:negative regulation of endothelial cell migration"/>
    <property type="evidence" value="ECO:0007669"/>
    <property type="project" value="Ensembl"/>
</dbReference>
<dbReference type="GO" id="GO:1900747">
    <property type="term" value="P:negative regulation of vascular endothelial growth factor signaling pathway"/>
    <property type="evidence" value="ECO:0007669"/>
    <property type="project" value="Ensembl"/>
</dbReference>
<dbReference type="GO" id="GO:0016239">
    <property type="term" value="P:positive regulation of macroautophagy"/>
    <property type="evidence" value="ECO:0007669"/>
    <property type="project" value="Ensembl"/>
</dbReference>
<dbReference type="GO" id="GO:0051901">
    <property type="term" value="P:positive regulation of mitochondrial depolarization"/>
    <property type="evidence" value="ECO:0007669"/>
    <property type="project" value="Ensembl"/>
</dbReference>
<dbReference type="GO" id="GO:0090141">
    <property type="term" value="P:positive regulation of mitochondrial fission"/>
    <property type="evidence" value="ECO:0007669"/>
    <property type="project" value="Ensembl"/>
</dbReference>
<dbReference type="GO" id="GO:0051897">
    <property type="term" value="P:positive regulation of phosphatidylinositol 3-kinase/protein kinase B signal transduction"/>
    <property type="evidence" value="ECO:0007669"/>
    <property type="project" value="Ensembl"/>
</dbReference>
<dbReference type="GO" id="GO:0045944">
    <property type="term" value="P:positive regulation of transcription by RNA polymerase II"/>
    <property type="evidence" value="ECO:0007669"/>
    <property type="project" value="Ensembl"/>
</dbReference>
<dbReference type="FunFam" id="3.80.10.10:FF:000038">
    <property type="entry name" value="Biglycan"/>
    <property type="match status" value="1"/>
</dbReference>
<dbReference type="Gene3D" id="3.80.10.10">
    <property type="entry name" value="Ribonuclease Inhibitor"/>
    <property type="match status" value="1"/>
</dbReference>
<dbReference type="InterPro" id="IPR001611">
    <property type="entry name" value="Leu-rich_rpt"/>
</dbReference>
<dbReference type="InterPro" id="IPR003591">
    <property type="entry name" value="Leu-rich_rpt_typical-subtyp"/>
</dbReference>
<dbReference type="InterPro" id="IPR032675">
    <property type="entry name" value="LRR_dom_sf"/>
</dbReference>
<dbReference type="InterPro" id="IPR000372">
    <property type="entry name" value="LRRNT"/>
</dbReference>
<dbReference type="InterPro" id="IPR050333">
    <property type="entry name" value="SLRP"/>
</dbReference>
<dbReference type="InterPro" id="IPR016352">
    <property type="entry name" value="SLRP_I_decor/aspor/byglycan"/>
</dbReference>
<dbReference type="PANTHER" id="PTHR45712">
    <property type="entry name" value="AGAP008170-PA"/>
    <property type="match status" value="1"/>
</dbReference>
<dbReference type="PANTHER" id="PTHR45712:SF14">
    <property type="entry name" value="DECORIN"/>
    <property type="match status" value="1"/>
</dbReference>
<dbReference type="Pfam" id="PF13855">
    <property type="entry name" value="LRR_8"/>
    <property type="match status" value="3"/>
</dbReference>
<dbReference type="Pfam" id="PF01462">
    <property type="entry name" value="LRRNT"/>
    <property type="match status" value="1"/>
</dbReference>
<dbReference type="PIRSF" id="PIRSF002490">
    <property type="entry name" value="SLRP_I"/>
    <property type="match status" value="1"/>
</dbReference>
<dbReference type="SMART" id="SM00364">
    <property type="entry name" value="LRR_BAC"/>
    <property type="match status" value="4"/>
</dbReference>
<dbReference type="SMART" id="SM00369">
    <property type="entry name" value="LRR_TYP"/>
    <property type="match status" value="6"/>
</dbReference>
<dbReference type="SMART" id="SM00013">
    <property type="entry name" value="LRRNT"/>
    <property type="match status" value="1"/>
</dbReference>
<dbReference type="SUPFAM" id="SSF52058">
    <property type="entry name" value="L domain-like"/>
    <property type="match status" value="1"/>
</dbReference>
<dbReference type="PROSITE" id="PS51450">
    <property type="entry name" value="LRR"/>
    <property type="match status" value="7"/>
</dbReference>
<proteinExistence type="evidence at transcript level"/>
<sequence>MKATIIFLLLAQVSWAGPFQQRGLFDFMLEDEASGIGPEDRAPDMPDLELLGPVCPFRCQCHLRVVQCSDLGLDKVPKDLPPDTTLLDLQNNKITEIKDGDFKNLKNLHTLILVNNKISKISPGAFTPLLKLERLYLSKNHLKELPEKMPKTLQELRAHENEITKVRKAVFNGLNQMIVVELGTNPLKSSGIENGAFQGMKKLSYIRIADTNITTIPQGLPPSLTELHLEGNKITKVDASSLKGLNNLAKLGLSFNSISAVDNGTLANTPHLRELHLDNNKLIRVPGGLAEHKYIQVVYLHNNNISAVGSNDFCPPGYNTKKASYSGVSLFSNPVQYWEIQPSTFRCVYVRSAIQLGNYK</sequence>
<gene>
    <name type="primary">DCN</name>
    <name type="synonym">DCN1C</name>
</gene>
<name>PGS2_CANLF</name>
<reference key="1">
    <citation type="submission" date="1996-12" db="EMBL/GenBank/DDBJ databases">
        <title>Complete coding sequence and genomic structure of canine decorin.</title>
        <authorList>
            <person name="Glant T.T."/>
        </authorList>
    </citation>
    <scope>NUCLEOTIDE SEQUENCE [MRNA]</scope>
</reference>
<reference key="2">
    <citation type="journal article" date="1996" name="Biochem. Genet.">
        <title>Gene-specific universal mammalian sequence-tagged sites: application to the canine genome.</title>
        <authorList>
            <person name="Venta P.J."/>
            <person name="Brouillette J.A."/>
            <person name="Yuzbasiyan-Gurkan V."/>
            <person name="Brewer G.J."/>
        </authorList>
    </citation>
    <scope>NUCLEOTIDE SEQUENCE [GENOMIC DNA] OF 244-259</scope>
</reference>
<evidence type="ECO:0000250" key="1"/>
<evidence type="ECO:0000250" key="2">
    <source>
        <dbReference type="UniProtKB" id="P07585"/>
    </source>
</evidence>
<evidence type="ECO:0000250" key="3">
    <source>
        <dbReference type="UniProtKB" id="Q01129"/>
    </source>
</evidence>
<evidence type="ECO:0000255" key="4"/>
<evidence type="ECO:0000305" key="5"/>
<feature type="signal peptide" evidence="3">
    <location>
        <begin position="1"/>
        <end position="16"/>
    </location>
</feature>
<feature type="propeptide" id="PRO_0000032705" evidence="3">
    <location>
        <begin position="17"/>
        <end position="30"/>
    </location>
</feature>
<feature type="chain" id="PRO_0000032706" description="Decorin">
    <location>
        <begin position="31"/>
        <end position="360"/>
    </location>
</feature>
<feature type="repeat" description="LRR 1">
    <location>
        <begin position="74"/>
        <end position="94"/>
    </location>
</feature>
<feature type="repeat" description="LRR 2">
    <location>
        <begin position="95"/>
        <end position="118"/>
    </location>
</feature>
<feature type="repeat" description="LRR 3">
    <location>
        <begin position="119"/>
        <end position="142"/>
    </location>
</feature>
<feature type="repeat" description="LRR 4">
    <location>
        <begin position="143"/>
        <end position="163"/>
    </location>
</feature>
<feature type="repeat" description="LRR 5">
    <location>
        <begin position="164"/>
        <end position="187"/>
    </location>
</feature>
<feature type="repeat" description="LRR 6">
    <location>
        <begin position="188"/>
        <end position="213"/>
    </location>
</feature>
<feature type="repeat" description="LRR 7">
    <location>
        <begin position="214"/>
        <end position="234"/>
    </location>
</feature>
<feature type="repeat" description="LRR 8">
    <location>
        <begin position="235"/>
        <end position="258"/>
    </location>
</feature>
<feature type="repeat" description="LRR 9">
    <location>
        <begin position="259"/>
        <end position="282"/>
    </location>
</feature>
<feature type="repeat" description="LRR 10">
    <location>
        <begin position="283"/>
        <end position="305"/>
    </location>
</feature>
<feature type="repeat" description="LRR 11">
    <location>
        <begin position="306"/>
        <end position="335"/>
    </location>
</feature>
<feature type="repeat" description="LRR 12">
    <location>
        <begin position="336"/>
        <end position="360"/>
    </location>
</feature>
<feature type="glycosylation site" description="O-linked (Xyl...) (glycosaminoglycan) serine" evidence="2">
    <location>
        <position position="34"/>
    </location>
</feature>
<feature type="glycosylation site" description="N-linked (GlcNAc...) asparagine" evidence="4">
    <location>
        <position position="212"/>
    </location>
</feature>
<feature type="glycosylation site" description="N-linked (GlcNAc...) asparagine" evidence="4">
    <location>
        <position position="263"/>
    </location>
</feature>
<feature type="glycosylation site" description="N-linked (GlcNAc...) asparagine" evidence="4">
    <location>
        <position position="304"/>
    </location>
</feature>
<feature type="disulfide bond" evidence="1">
    <location>
        <begin position="55"/>
        <end position="61"/>
    </location>
</feature>
<feature type="disulfide bond" evidence="1">
    <location>
        <begin position="59"/>
        <end position="68"/>
    </location>
</feature>
<feature type="disulfide bond" evidence="1">
    <location>
        <begin position="314"/>
        <end position="347"/>
    </location>
</feature>